<reference key="1">
    <citation type="submission" date="2007-10" db="EMBL/GenBank/DDBJ databases">
        <title>Complete sequence of chromosome 1 of Burkholderia multivorans ATCC 17616.</title>
        <authorList>
            <person name="Copeland A."/>
            <person name="Lucas S."/>
            <person name="Lapidus A."/>
            <person name="Barry K."/>
            <person name="Glavina del Rio T."/>
            <person name="Dalin E."/>
            <person name="Tice H."/>
            <person name="Pitluck S."/>
            <person name="Chain P."/>
            <person name="Malfatti S."/>
            <person name="Shin M."/>
            <person name="Vergez L."/>
            <person name="Schmutz J."/>
            <person name="Larimer F."/>
            <person name="Land M."/>
            <person name="Hauser L."/>
            <person name="Kyrpides N."/>
            <person name="Kim E."/>
            <person name="Tiedje J."/>
            <person name="Richardson P."/>
        </authorList>
    </citation>
    <scope>NUCLEOTIDE SEQUENCE [LARGE SCALE GENOMIC DNA]</scope>
    <source>
        <strain>ATCC 17616 / 249</strain>
    </source>
</reference>
<reference key="2">
    <citation type="submission" date="2007-04" db="EMBL/GenBank/DDBJ databases">
        <title>Complete genome sequence of Burkholderia multivorans ATCC 17616.</title>
        <authorList>
            <person name="Ohtsubo Y."/>
            <person name="Yamashita A."/>
            <person name="Kurokawa K."/>
            <person name="Takami H."/>
            <person name="Yuhara S."/>
            <person name="Nishiyama E."/>
            <person name="Endo R."/>
            <person name="Miyazaki R."/>
            <person name="Ono A."/>
            <person name="Yano K."/>
            <person name="Ito M."/>
            <person name="Sota M."/>
            <person name="Yuji N."/>
            <person name="Hattori M."/>
            <person name="Tsuda M."/>
        </authorList>
    </citation>
    <scope>NUCLEOTIDE SEQUENCE [LARGE SCALE GENOMIC DNA]</scope>
    <source>
        <strain>ATCC 17616 / 249</strain>
    </source>
</reference>
<dbReference type="EMBL" id="CP000868">
    <property type="protein sequence ID" value="ABX16317.1"/>
    <property type="molecule type" value="Genomic_DNA"/>
</dbReference>
<dbReference type="EMBL" id="AP009385">
    <property type="protein sequence ID" value="BAG42569.1"/>
    <property type="molecule type" value="Genomic_DNA"/>
</dbReference>
<dbReference type="RefSeq" id="WP_006401601.1">
    <property type="nucleotide sequence ID" value="NC_010804.1"/>
</dbReference>
<dbReference type="SMR" id="A9AGB8"/>
<dbReference type="STRING" id="395019.BMULJ_00605"/>
<dbReference type="GeneID" id="89569034"/>
<dbReference type="KEGG" id="bmj:BMULJ_00605"/>
<dbReference type="KEGG" id="bmu:Bmul_2633"/>
<dbReference type="eggNOG" id="COG0443">
    <property type="taxonomic scope" value="Bacteria"/>
</dbReference>
<dbReference type="HOGENOM" id="CLU_005965_2_1_4"/>
<dbReference type="Proteomes" id="UP000008815">
    <property type="component" value="Chromosome 1"/>
</dbReference>
<dbReference type="GO" id="GO:0005524">
    <property type="term" value="F:ATP binding"/>
    <property type="evidence" value="ECO:0007669"/>
    <property type="project" value="UniProtKB-UniRule"/>
</dbReference>
<dbReference type="GO" id="GO:0140662">
    <property type="term" value="F:ATP-dependent protein folding chaperone"/>
    <property type="evidence" value="ECO:0007669"/>
    <property type="project" value="InterPro"/>
</dbReference>
<dbReference type="GO" id="GO:0051082">
    <property type="term" value="F:unfolded protein binding"/>
    <property type="evidence" value="ECO:0007669"/>
    <property type="project" value="InterPro"/>
</dbReference>
<dbReference type="CDD" id="cd10234">
    <property type="entry name" value="ASKHA_NBD_HSP70_DnaK-like"/>
    <property type="match status" value="1"/>
</dbReference>
<dbReference type="FunFam" id="2.60.34.10:FF:000014">
    <property type="entry name" value="Chaperone protein DnaK HSP70"/>
    <property type="match status" value="1"/>
</dbReference>
<dbReference type="FunFam" id="1.20.1270.10:FF:000001">
    <property type="entry name" value="Molecular chaperone DnaK"/>
    <property type="match status" value="1"/>
</dbReference>
<dbReference type="FunFam" id="3.30.420.40:FF:000004">
    <property type="entry name" value="Molecular chaperone DnaK"/>
    <property type="match status" value="1"/>
</dbReference>
<dbReference type="FunFam" id="3.90.640.10:FF:000003">
    <property type="entry name" value="Molecular chaperone DnaK"/>
    <property type="match status" value="1"/>
</dbReference>
<dbReference type="Gene3D" id="1.20.1270.10">
    <property type="match status" value="1"/>
</dbReference>
<dbReference type="Gene3D" id="3.30.420.40">
    <property type="match status" value="2"/>
</dbReference>
<dbReference type="Gene3D" id="3.90.640.10">
    <property type="entry name" value="Actin, Chain A, domain 4"/>
    <property type="match status" value="1"/>
</dbReference>
<dbReference type="Gene3D" id="2.60.34.10">
    <property type="entry name" value="Substrate Binding Domain Of DNAk, Chain A, domain 1"/>
    <property type="match status" value="1"/>
</dbReference>
<dbReference type="HAMAP" id="MF_00332">
    <property type="entry name" value="DnaK"/>
    <property type="match status" value="1"/>
</dbReference>
<dbReference type="InterPro" id="IPR043129">
    <property type="entry name" value="ATPase_NBD"/>
</dbReference>
<dbReference type="InterPro" id="IPR012725">
    <property type="entry name" value="Chaperone_DnaK"/>
</dbReference>
<dbReference type="InterPro" id="IPR018181">
    <property type="entry name" value="Heat_shock_70_CS"/>
</dbReference>
<dbReference type="InterPro" id="IPR029048">
    <property type="entry name" value="HSP70_C_sf"/>
</dbReference>
<dbReference type="InterPro" id="IPR029047">
    <property type="entry name" value="HSP70_peptide-bd_sf"/>
</dbReference>
<dbReference type="InterPro" id="IPR013126">
    <property type="entry name" value="Hsp_70_fam"/>
</dbReference>
<dbReference type="NCBIfam" id="NF001413">
    <property type="entry name" value="PRK00290.1"/>
    <property type="match status" value="1"/>
</dbReference>
<dbReference type="NCBIfam" id="NF003520">
    <property type="entry name" value="PRK05183.1"/>
    <property type="match status" value="1"/>
</dbReference>
<dbReference type="NCBIfam" id="TIGR02350">
    <property type="entry name" value="prok_dnaK"/>
    <property type="match status" value="1"/>
</dbReference>
<dbReference type="PANTHER" id="PTHR19375">
    <property type="entry name" value="HEAT SHOCK PROTEIN 70KDA"/>
    <property type="match status" value="1"/>
</dbReference>
<dbReference type="Pfam" id="PF00012">
    <property type="entry name" value="HSP70"/>
    <property type="match status" value="1"/>
</dbReference>
<dbReference type="PRINTS" id="PR00301">
    <property type="entry name" value="HEATSHOCK70"/>
</dbReference>
<dbReference type="SUPFAM" id="SSF53067">
    <property type="entry name" value="Actin-like ATPase domain"/>
    <property type="match status" value="2"/>
</dbReference>
<dbReference type="SUPFAM" id="SSF100934">
    <property type="entry name" value="Heat shock protein 70kD (HSP70), C-terminal subdomain"/>
    <property type="match status" value="1"/>
</dbReference>
<dbReference type="SUPFAM" id="SSF100920">
    <property type="entry name" value="Heat shock protein 70kD (HSP70), peptide-binding domain"/>
    <property type="match status" value="1"/>
</dbReference>
<dbReference type="PROSITE" id="PS00297">
    <property type="entry name" value="HSP70_1"/>
    <property type="match status" value="1"/>
</dbReference>
<dbReference type="PROSITE" id="PS00329">
    <property type="entry name" value="HSP70_2"/>
    <property type="match status" value="1"/>
</dbReference>
<dbReference type="PROSITE" id="PS01036">
    <property type="entry name" value="HSP70_3"/>
    <property type="match status" value="1"/>
</dbReference>
<protein>
    <recommendedName>
        <fullName evidence="1">Chaperone protein DnaK</fullName>
    </recommendedName>
    <alternativeName>
        <fullName evidence="1">HSP70</fullName>
    </alternativeName>
    <alternativeName>
        <fullName evidence="1">Heat shock 70 kDa protein</fullName>
    </alternativeName>
    <alternativeName>
        <fullName evidence="1">Heat shock protein 70</fullName>
    </alternativeName>
</protein>
<comment type="function">
    <text evidence="1">Acts as a chaperone.</text>
</comment>
<comment type="induction">
    <text evidence="1">By stress conditions e.g. heat shock.</text>
</comment>
<comment type="similarity">
    <text evidence="1">Belongs to the heat shock protein 70 family.</text>
</comment>
<gene>
    <name evidence="1" type="primary">dnaK</name>
    <name type="ordered locus">Bmul_2633</name>
    <name type="ordered locus">BMULJ_00605</name>
</gene>
<name>DNAK_BURM1</name>
<proteinExistence type="inferred from homology"/>
<organism>
    <name type="scientific">Burkholderia multivorans (strain ATCC 17616 / 249)</name>
    <dbReference type="NCBI Taxonomy" id="395019"/>
    <lineage>
        <taxon>Bacteria</taxon>
        <taxon>Pseudomonadati</taxon>
        <taxon>Pseudomonadota</taxon>
        <taxon>Betaproteobacteria</taxon>
        <taxon>Burkholderiales</taxon>
        <taxon>Burkholderiaceae</taxon>
        <taxon>Burkholderia</taxon>
        <taxon>Burkholderia cepacia complex</taxon>
    </lineage>
</organism>
<sequence>MGKIIGIDLGTTNSCVAVMEGNQVKVIENSEGARTTPSIIAYMDDNEVLVGAPAKRQSVTNPKNTLFAVKRLIGRRFEEKEVQKDIGLMPYSIIKADNGDAWVEAHGQKLAPPQVSAEVLRKMKKTAEDYLGEPVTEAVITVPAYFNDSQRQATKDAGRIAGLEVKRIINEPTAAALAFGLDKAEKGDRKIAVYDLGGGTFDVSIIEIADVDGEKQFEVLSTNGDTFLGGEDFDQRIIDYIIGEFKKEQGVDLSKDVLALQRLKEAAEKAKIELSSSQQTEINLPYITADASGPKHLNLKITRAKLEALVEDLVERTIEPCRIAIKDAGVKVSDIDDVILVGGQTRMPKVQEKVKEFFGKEPRRDVNPDEAVAVGAAIQGQVLSGDRKDVLLLDVTPLSLGIETLGGVMTKMISKNTTIPTKHSQVYSTADDNQSAVTIKVYQGEREMAAGNKLLGEFNLEGIPPAPRGVPQIEVTFDIDANGILHVGAKDKATGKENKITIKANSGLSEAEIDQMIKDAEANAAEDHKLRELADSRNQGDALVHSTKKALSEYGDKLDAGEKEKIEAALKSLEDVLKDTSADKAAIDAKVEELGKASQKLGEKMYADMQAQAGAAGAAGAAEGAAQGGAQQAADDVVDAEFKEVKKD</sequence>
<keyword id="KW-0067">ATP-binding</keyword>
<keyword id="KW-0143">Chaperone</keyword>
<keyword id="KW-0547">Nucleotide-binding</keyword>
<keyword id="KW-0597">Phosphoprotein</keyword>
<keyword id="KW-1185">Reference proteome</keyword>
<keyword id="KW-0346">Stress response</keyword>
<evidence type="ECO:0000255" key="1">
    <source>
        <dbReference type="HAMAP-Rule" id="MF_00332"/>
    </source>
</evidence>
<evidence type="ECO:0000256" key="2">
    <source>
        <dbReference type="SAM" id="MobiDB-lite"/>
    </source>
</evidence>
<accession>A9AGB8</accession>
<feature type="chain" id="PRO_1000119680" description="Chaperone protein DnaK">
    <location>
        <begin position="1"/>
        <end position="648"/>
    </location>
</feature>
<feature type="region of interest" description="Disordered" evidence="2">
    <location>
        <begin position="612"/>
        <end position="631"/>
    </location>
</feature>
<feature type="modified residue" description="Phosphothreonine; by autocatalysis" evidence="1">
    <location>
        <position position="200"/>
    </location>
</feature>